<evidence type="ECO:0000255" key="1">
    <source>
        <dbReference type="HAMAP-Rule" id="MF_00213"/>
    </source>
</evidence>
<reference key="1">
    <citation type="submission" date="2007-10" db="EMBL/GenBank/DDBJ databases">
        <title>Complete sequence of Methanococcus maripaludis C6.</title>
        <authorList>
            <consortium name="US DOE Joint Genome Institute"/>
            <person name="Copeland A."/>
            <person name="Lucas S."/>
            <person name="Lapidus A."/>
            <person name="Barry K."/>
            <person name="Glavina del Rio T."/>
            <person name="Dalin E."/>
            <person name="Tice H."/>
            <person name="Pitluck S."/>
            <person name="Clum A."/>
            <person name="Schmutz J."/>
            <person name="Larimer F."/>
            <person name="Land M."/>
            <person name="Hauser L."/>
            <person name="Kyrpides N."/>
            <person name="Mikhailova N."/>
            <person name="Sieprawska-Lupa M."/>
            <person name="Whitman W.B."/>
            <person name="Richardson P."/>
        </authorList>
    </citation>
    <scope>NUCLEOTIDE SEQUENCE [LARGE SCALE GENOMIC DNA]</scope>
    <source>
        <strain>C6 / ATCC BAA-1332</strain>
    </source>
</reference>
<comment type="function">
    <text evidence="1">Involved in the maturation of [NiFe] hydrogenases. Required for nickel insertion into the metal center of the hydrogenase.</text>
</comment>
<comment type="similarity">
    <text evidence="1">Belongs to the HypA/HybF family.</text>
</comment>
<proteinExistence type="inferred from homology"/>
<organism>
    <name type="scientific">Methanococcus maripaludis (strain C6 / ATCC BAA-1332)</name>
    <dbReference type="NCBI Taxonomy" id="444158"/>
    <lineage>
        <taxon>Archaea</taxon>
        <taxon>Methanobacteriati</taxon>
        <taxon>Methanobacteriota</taxon>
        <taxon>Methanomada group</taxon>
        <taxon>Methanococci</taxon>
        <taxon>Methanococcales</taxon>
        <taxon>Methanococcaceae</taxon>
        <taxon>Methanococcus</taxon>
    </lineage>
</organism>
<sequence length="126" mass="14146">MHELSYATSVLNAILDAIKQQETLGRKVIKVTDINLEIGDLTLLSVDQLQFVFEVISEDTVCNGAELKAEMVKPKIFCMDCEFEGNLDTKDELEVRCPKCESVNVKLKGGKEFNIVNATIEFDDEE</sequence>
<gene>
    <name evidence="1" type="primary">hypA</name>
    <name type="ordered locus">MmarC6_0650</name>
</gene>
<dbReference type="EMBL" id="CP000867">
    <property type="protein sequence ID" value="ABX01467.1"/>
    <property type="molecule type" value="Genomic_DNA"/>
</dbReference>
<dbReference type="SMR" id="A9A7S5"/>
<dbReference type="STRING" id="444158.MmarC6_0650"/>
<dbReference type="KEGG" id="mmx:MmarC6_0650"/>
<dbReference type="eggNOG" id="arCOG04426">
    <property type="taxonomic scope" value="Archaea"/>
</dbReference>
<dbReference type="HOGENOM" id="CLU_126929_2_1_2"/>
<dbReference type="OrthoDB" id="36835at2157"/>
<dbReference type="PhylomeDB" id="A9A7S5"/>
<dbReference type="GO" id="GO:0016151">
    <property type="term" value="F:nickel cation binding"/>
    <property type="evidence" value="ECO:0007669"/>
    <property type="project" value="UniProtKB-UniRule"/>
</dbReference>
<dbReference type="GO" id="GO:0008270">
    <property type="term" value="F:zinc ion binding"/>
    <property type="evidence" value="ECO:0007669"/>
    <property type="project" value="UniProtKB-UniRule"/>
</dbReference>
<dbReference type="GO" id="GO:0051604">
    <property type="term" value="P:protein maturation"/>
    <property type="evidence" value="ECO:0007669"/>
    <property type="project" value="InterPro"/>
</dbReference>
<dbReference type="GO" id="GO:0036211">
    <property type="term" value="P:protein modification process"/>
    <property type="evidence" value="ECO:0007669"/>
    <property type="project" value="UniProtKB-UniRule"/>
</dbReference>
<dbReference type="Gene3D" id="3.30.2320.80">
    <property type="match status" value="1"/>
</dbReference>
<dbReference type="HAMAP" id="MF_00213">
    <property type="entry name" value="HypA_HybF"/>
    <property type="match status" value="1"/>
</dbReference>
<dbReference type="InterPro" id="IPR000688">
    <property type="entry name" value="HypA/HybF"/>
</dbReference>
<dbReference type="NCBIfam" id="TIGR00100">
    <property type="entry name" value="hypA"/>
    <property type="match status" value="1"/>
</dbReference>
<dbReference type="PANTHER" id="PTHR34535">
    <property type="entry name" value="HYDROGENASE MATURATION FACTOR HYPA"/>
    <property type="match status" value="1"/>
</dbReference>
<dbReference type="PANTHER" id="PTHR34535:SF3">
    <property type="entry name" value="HYDROGENASE MATURATION FACTOR HYPA"/>
    <property type="match status" value="1"/>
</dbReference>
<dbReference type="Pfam" id="PF01155">
    <property type="entry name" value="HypA"/>
    <property type="match status" value="1"/>
</dbReference>
<dbReference type="PIRSF" id="PIRSF004761">
    <property type="entry name" value="Hydrgn_mat_HypA"/>
    <property type="match status" value="1"/>
</dbReference>
<protein>
    <recommendedName>
        <fullName evidence="1">Hydrogenase maturation factor HypA</fullName>
    </recommendedName>
</protein>
<feature type="chain" id="PRO_1000099894" description="Hydrogenase maturation factor HypA">
    <location>
        <begin position="1"/>
        <end position="126"/>
    </location>
</feature>
<feature type="binding site" evidence="1">
    <location>
        <position position="2"/>
    </location>
    <ligand>
        <name>Ni(2+)</name>
        <dbReference type="ChEBI" id="CHEBI:49786"/>
    </ligand>
</feature>
<feature type="binding site" evidence="1">
    <location>
        <position position="78"/>
    </location>
    <ligand>
        <name>Zn(2+)</name>
        <dbReference type="ChEBI" id="CHEBI:29105"/>
    </ligand>
</feature>
<feature type="binding site" evidence="1">
    <location>
        <position position="81"/>
    </location>
    <ligand>
        <name>Zn(2+)</name>
        <dbReference type="ChEBI" id="CHEBI:29105"/>
    </ligand>
</feature>
<feature type="binding site" evidence="1">
    <location>
        <position position="97"/>
    </location>
    <ligand>
        <name>Zn(2+)</name>
        <dbReference type="ChEBI" id="CHEBI:29105"/>
    </ligand>
</feature>
<feature type="binding site" evidence="1">
    <location>
        <position position="100"/>
    </location>
    <ligand>
        <name>Zn(2+)</name>
        <dbReference type="ChEBI" id="CHEBI:29105"/>
    </ligand>
</feature>
<name>HYPA_METM6</name>
<accession>A9A7S5</accession>
<keyword id="KW-0479">Metal-binding</keyword>
<keyword id="KW-0533">Nickel</keyword>
<keyword id="KW-0862">Zinc</keyword>